<protein>
    <recommendedName>
        <fullName evidence="1">Large ribosomal subunit protein uL5</fullName>
    </recommendedName>
    <alternativeName>
        <fullName evidence="2">50S ribosomal protein L5</fullName>
    </alternativeName>
</protein>
<feature type="chain" id="PRO_1000142456" description="Large ribosomal subunit protein uL5">
    <location>
        <begin position="1"/>
        <end position="180"/>
    </location>
</feature>
<organism>
    <name type="scientific">Stenotrophomonas maltophilia (strain K279a)</name>
    <dbReference type="NCBI Taxonomy" id="522373"/>
    <lineage>
        <taxon>Bacteria</taxon>
        <taxon>Pseudomonadati</taxon>
        <taxon>Pseudomonadota</taxon>
        <taxon>Gammaproteobacteria</taxon>
        <taxon>Lysobacterales</taxon>
        <taxon>Lysobacteraceae</taxon>
        <taxon>Stenotrophomonas</taxon>
        <taxon>Stenotrophomonas maltophilia group</taxon>
    </lineage>
</organism>
<sequence length="180" mass="20184">MSSRLEKFYKDEVVPALMKQFGYTNPMEVPKLVKVTLNMGVGEAATNKKILENAVGDMTKISGQKPVVTKSRVSVASFKIRDGWPIGCKTTLRRHKMYEFLDRLINISLPRVRDFRGVSGRSFDGRGNFNMGVKEQIIFPEIDFDAVDAIRGMDIAITTTAKTDAEAKALLAAFKFPFRN</sequence>
<comment type="function">
    <text evidence="1">This is one of the proteins that bind and probably mediate the attachment of the 5S RNA into the large ribosomal subunit, where it forms part of the central protuberance. In the 70S ribosome it contacts protein S13 of the 30S subunit (bridge B1b), connecting the 2 subunits; this bridge is implicated in subunit movement. Contacts the P site tRNA; the 5S rRNA and some of its associated proteins might help stabilize positioning of ribosome-bound tRNAs.</text>
</comment>
<comment type="subunit">
    <text evidence="1">Part of the 50S ribosomal subunit; part of the 5S rRNA/L5/L18/L25 subcomplex. Contacts the 5S rRNA and the P site tRNA. Forms a bridge to the 30S subunit in the 70S ribosome.</text>
</comment>
<comment type="similarity">
    <text evidence="1">Belongs to the universal ribosomal protein uL5 family.</text>
</comment>
<gene>
    <name evidence="1" type="primary">rplE</name>
    <name type="ordered locus">Smlt0918</name>
</gene>
<keyword id="KW-1185">Reference proteome</keyword>
<keyword id="KW-0687">Ribonucleoprotein</keyword>
<keyword id="KW-0689">Ribosomal protein</keyword>
<keyword id="KW-0694">RNA-binding</keyword>
<keyword id="KW-0699">rRNA-binding</keyword>
<keyword id="KW-0820">tRNA-binding</keyword>
<reference key="1">
    <citation type="journal article" date="2008" name="Genome Biol.">
        <title>The complete genome, comparative and functional analysis of Stenotrophomonas maltophilia reveals an organism heavily shielded by drug resistance determinants.</title>
        <authorList>
            <person name="Crossman L.C."/>
            <person name="Gould V.C."/>
            <person name="Dow J.M."/>
            <person name="Vernikos G.S."/>
            <person name="Okazaki A."/>
            <person name="Sebaihia M."/>
            <person name="Saunders D."/>
            <person name="Arrowsmith C."/>
            <person name="Carver T."/>
            <person name="Peters N."/>
            <person name="Adlem E."/>
            <person name="Kerhornou A."/>
            <person name="Lord A."/>
            <person name="Murphy L."/>
            <person name="Seeger K."/>
            <person name="Squares R."/>
            <person name="Rutter S."/>
            <person name="Quail M.A."/>
            <person name="Rajandream M.A."/>
            <person name="Harris D."/>
            <person name="Churcher C."/>
            <person name="Bentley S.D."/>
            <person name="Parkhill J."/>
            <person name="Thomson N.R."/>
            <person name="Avison M.B."/>
        </authorList>
    </citation>
    <scope>NUCLEOTIDE SEQUENCE [LARGE SCALE GENOMIC DNA]</scope>
    <source>
        <strain>K279a</strain>
    </source>
</reference>
<dbReference type="EMBL" id="AM743169">
    <property type="protein sequence ID" value="CAQ44487.1"/>
    <property type="molecule type" value="Genomic_DNA"/>
</dbReference>
<dbReference type="RefSeq" id="WP_004154491.1">
    <property type="nucleotide sequence ID" value="NC_010943.1"/>
</dbReference>
<dbReference type="SMR" id="B2FQJ6"/>
<dbReference type="EnsemblBacteria" id="CAQ44487">
    <property type="protein sequence ID" value="CAQ44487"/>
    <property type="gene ID" value="Smlt0918"/>
</dbReference>
<dbReference type="GeneID" id="93831948"/>
<dbReference type="KEGG" id="sml:Smlt0918"/>
<dbReference type="eggNOG" id="COG0094">
    <property type="taxonomic scope" value="Bacteria"/>
</dbReference>
<dbReference type="HOGENOM" id="CLU_061015_2_1_6"/>
<dbReference type="Proteomes" id="UP000008840">
    <property type="component" value="Chromosome"/>
</dbReference>
<dbReference type="GO" id="GO:1990904">
    <property type="term" value="C:ribonucleoprotein complex"/>
    <property type="evidence" value="ECO:0007669"/>
    <property type="project" value="UniProtKB-KW"/>
</dbReference>
<dbReference type="GO" id="GO:0005840">
    <property type="term" value="C:ribosome"/>
    <property type="evidence" value="ECO:0007669"/>
    <property type="project" value="UniProtKB-KW"/>
</dbReference>
<dbReference type="GO" id="GO:0019843">
    <property type="term" value="F:rRNA binding"/>
    <property type="evidence" value="ECO:0007669"/>
    <property type="project" value="UniProtKB-UniRule"/>
</dbReference>
<dbReference type="GO" id="GO:0003735">
    <property type="term" value="F:structural constituent of ribosome"/>
    <property type="evidence" value="ECO:0007669"/>
    <property type="project" value="InterPro"/>
</dbReference>
<dbReference type="GO" id="GO:0000049">
    <property type="term" value="F:tRNA binding"/>
    <property type="evidence" value="ECO:0007669"/>
    <property type="project" value="UniProtKB-UniRule"/>
</dbReference>
<dbReference type="GO" id="GO:0006412">
    <property type="term" value="P:translation"/>
    <property type="evidence" value="ECO:0007669"/>
    <property type="project" value="UniProtKB-UniRule"/>
</dbReference>
<dbReference type="FunFam" id="3.30.1440.10:FF:000001">
    <property type="entry name" value="50S ribosomal protein L5"/>
    <property type="match status" value="1"/>
</dbReference>
<dbReference type="Gene3D" id="3.30.1440.10">
    <property type="match status" value="1"/>
</dbReference>
<dbReference type="HAMAP" id="MF_01333_B">
    <property type="entry name" value="Ribosomal_uL5_B"/>
    <property type="match status" value="1"/>
</dbReference>
<dbReference type="InterPro" id="IPR002132">
    <property type="entry name" value="Ribosomal_uL5"/>
</dbReference>
<dbReference type="InterPro" id="IPR020930">
    <property type="entry name" value="Ribosomal_uL5_bac-type"/>
</dbReference>
<dbReference type="InterPro" id="IPR031309">
    <property type="entry name" value="Ribosomal_uL5_C"/>
</dbReference>
<dbReference type="InterPro" id="IPR020929">
    <property type="entry name" value="Ribosomal_uL5_CS"/>
</dbReference>
<dbReference type="InterPro" id="IPR022803">
    <property type="entry name" value="Ribosomal_uL5_dom_sf"/>
</dbReference>
<dbReference type="InterPro" id="IPR031310">
    <property type="entry name" value="Ribosomal_uL5_N"/>
</dbReference>
<dbReference type="NCBIfam" id="NF000585">
    <property type="entry name" value="PRK00010.1"/>
    <property type="match status" value="1"/>
</dbReference>
<dbReference type="PANTHER" id="PTHR11994">
    <property type="entry name" value="60S RIBOSOMAL PROTEIN L11-RELATED"/>
    <property type="match status" value="1"/>
</dbReference>
<dbReference type="Pfam" id="PF00281">
    <property type="entry name" value="Ribosomal_L5"/>
    <property type="match status" value="1"/>
</dbReference>
<dbReference type="Pfam" id="PF00673">
    <property type="entry name" value="Ribosomal_L5_C"/>
    <property type="match status" value="1"/>
</dbReference>
<dbReference type="PIRSF" id="PIRSF002161">
    <property type="entry name" value="Ribosomal_L5"/>
    <property type="match status" value="1"/>
</dbReference>
<dbReference type="SUPFAM" id="SSF55282">
    <property type="entry name" value="RL5-like"/>
    <property type="match status" value="1"/>
</dbReference>
<dbReference type="PROSITE" id="PS00358">
    <property type="entry name" value="RIBOSOMAL_L5"/>
    <property type="match status" value="1"/>
</dbReference>
<evidence type="ECO:0000255" key="1">
    <source>
        <dbReference type="HAMAP-Rule" id="MF_01333"/>
    </source>
</evidence>
<evidence type="ECO:0000305" key="2"/>
<accession>B2FQJ6</accession>
<name>RL5_STRMK</name>
<proteinExistence type="inferred from homology"/>